<dbReference type="EC" id="2.7.2.3" evidence="1"/>
<dbReference type="EMBL" id="CP000437">
    <property type="protein sequence ID" value="ABI82992.1"/>
    <property type="molecule type" value="Genomic_DNA"/>
</dbReference>
<dbReference type="RefSeq" id="WP_003016144.1">
    <property type="nucleotide sequence ID" value="NC_017463.1"/>
</dbReference>
<dbReference type="SMR" id="Q0BLP2"/>
<dbReference type="KEGG" id="fth:FTH_1122"/>
<dbReference type="UniPathway" id="UPA00109">
    <property type="reaction ID" value="UER00185"/>
</dbReference>
<dbReference type="GO" id="GO:0005829">
    <property type="term" value="C:cytosol"/>
    <property type="evidence" value="ECO:0007669"/>
    <property type="project" value="TreeGrafter"/>
</dbReference>
<dbReference type="GO" id="GO:0043531">
    <property type="term" value="F:ADP binding"/>
    <property type="evidence" value="ECO:0007669"/>
    <property type="project" value="TreeGrafter"/>
</dbReference>
<dbReference type="GO" id="GO:0005524">
    <property type="term" value="F:ATP binding"/>
    <property type="evidence" value="ECO:0007669"/>
    <property type="project" value="UniProtKB-KW"/>
</dbReference>
<dbReference type="GO" id="GO:0004618">
    <property type="term" value="F:phosphoglycerate kinase activity"/>
    <property type="evidence" value="ECO:0007669"/>
    <property type="project" value="UniProtKB-UniRule"/>
</dbReference>
<dbReference type="GO" id="GO:0006094">
    <property type="term" value="P:gluconeogenesis"/>
    <property type="evidence" value="ECO:0007669"/>
    <property type="project" value="TreeGrafter"/>
</dbReference>
<dbReference type="GO" id="GO:0006096">
    <property type="term" value="P:glycolytic process"/>
    <property type="evidence" value="ECO:0007669"/>
    <property type="project" value="UniProtKB-UniRule"/>
</dbReference>
<dbReference type="FunFam" id="3.40.50.1260:FF:000001">
    <property type="entry name" value="Phosphoglycerate kinase"/>
    <property type="match status" value="1"/>
</dbReference>
<dbReference type="FunFam" id="3.40.50.1260:FF:000005">
    <property type="entry name" value="Phosphoglycerate kinase"/>
    <property type="match status" value="1"/>
</dbReference>
<dbReference type="Gene3D" id="3.40.50.1260">
    <property type="entry name" value="Phosphoglycerate kinase, N-terminal domain"/>
    <property type="match status" value="2"/>
</dbReference>
<dbReference type="HAMAP" id="MF_00145">
    <property type="entry name" value="Phosphoglyc_kinase"/>
    <property type="match status" value="1"/>
</dbReference>
<dbReference type="InterPro" id="IPR001576">
    <property type="entry name" value="Phosphoglycerate_kinase"/>
</dbReference>
<dbReference type="InterPro" id="IPR015911">
    <property type="entry name" value="Phosphoglycerate_kinase_CS"/>
</dbReference>
<dbReference type="InterPro" id="IPR015824">
    <property type="entry name" value="Phosphoglycerate_kinase_N"/>
</dbReference>
<dbReference type="InterPro" id="IPR036043">
    <property type="entry name" value="Phosphoglycerate_kinase_sf"/>
</dbReference>
<dbReference type="PANTHER" id="PTHR11406">
    <property type="entry name" value="PHOSPHOGLYCERATE KINASE"/>
    <property type="match status" value="1"/>
</dbReference>
<dbReference type="PANTHER" id="PTHR11406:SF23">
    <property type="entry name" value="PHOSPHOGLYCERATE KINASE 1, CHLOROPLASTIC-RELATED"/>
    <property type="match status" value="1"/>
</dbReference>
<dbReference type="Pfam" id="PF00162">
    <property type="entry name" value="PGK"/>
    <property type="match status" value="1"/>
</dbReference>
<dbReference type="PIRSF" id="PIRSF000724">
    <property type="entry name" value="Pgk"/>
    <property type="match status" value="1"/>
</dbReference>
<dbReference type="PRINTS" id="PR00477">
    <property type="entry name" value="PHGLYCKINASE"/>
</dbReference>
<dbReference type="SUPFAM" id="SSF53748">
    <property type="entry name" value="Phosphoglycerate kinase"/>
    <property type="match status" value="1"/>
</dbReference>
<dbReference type="PROSITE" id="PS00111">
    <property type="entry name" value="PGLYCERATE_KINASE"/>
    <property type="match status" value="1"/>
</dbReference>
<protein>
    <recommendedName>
        <fullName evidence="1">Phosphoglycerate kinase</fullName>
        <ecNumber evidence="1">2.7.2.3</ecNumber>
    </recommendedName>
</protein>
<gene>
    <name evidence="1" type="primary">pgk</name>
    <name type="ordered locus">FTH_1122</name>
</gene>
<sequence length="392" mass="42011">MSFLTLKDVDLKDKKVLVRVDFNVPVKDGKVTSKVRIEAAIPTIQYILDQGGAVILMSHLGRPTEGEYDSQFSLEPVAKALSEIINKPVKFAKDWLDGVDVKAGEIVMCENVRFNIGEKKSTDDLSKKIASLGDVFVMDAFATAHRAQASTYGVAKYIPVACAGILLTNEIQALEKALKSPKKPMAAIVGGSKVSTKLSVLNNLLDKVEILIVGGGIANTFIKAEGFDVGNSLYEQDLVAEATEILAKAKALGVNIPVPVDVRVAKEFSENAQAIIKKVSYVVADEMILDIGPESQKIIAELLKSANTILWNGPVGVFEFDNFAEGTKALSLAIAQSHAFSVAGGGDTIAAIEKFGIKDQVSYISTAGGAFLEFLEGKKLPAIEILKEKAIR</sequence>
<reference key="1">
    <citation type="journal article" date="2006" name="J. Bacteriol.">
        <title>Chromosome rearrangement and diversification of Francisella tularensis revealed by the type B (OSU18) genome sequence.</title>
        <authorList>
            <person name="Petrosino J.F."/>
            <person name="Xiang Q."/>
            <person name="Karpathy S.E."/>
            <person name="Jiang H."/>
            <person name="Yerrapragada S."/>
            <person name="Liu Y."/>
            <person name="Gioia J."/>
            <person name="Hemphill L."/>
            <person name="Gonzalez A."/>
            <person name="Raghavan T.M."/>
            <person name="Uzman A."/>
            <person name="Fox G.E."/>
            <person name="Highlander S."/>
            <person name="Reichard M."/>
            <person name="Morton R.J."/>
            <person name="Clinkenbeard K.D."/>
            <person name="Weinstock G.M."/>
        </authorList>
    </citation>
    <scope>NUCLEOTIDE SEQUENCE [LARGE SCALE GENOMIC DNA]</scope>
    <source>
        <strain>OSU18</strain>
    </source>
</reference>
<keyword id="KW-0067">ATP-binding</keyword>
<keyword id="KW-0963">Cytoplasm</keyword>
<keyword id="KW-0324">Glycolysis</keyword>
<keyword id="KW-0418">Kinase</keyword>
<keyword id="KW-0547">Nucleotide-binding</keyword>
<keyword id="KW-0808">Transferase</keyword>
<comment type="catalytic activity">
    <reaction evidence="1">
        <text>(2R)-3-phosphoglycerate + ATP = (2R)-3-phospho-glyceroyl phosphate + ADP</text>
        <dbReference type="Rhea" id="RHEA:14801"/>
        <dbReference type="ChEBI" id="CHEBI:30616"/>
        <dbReference type="ChEBI" id="CHEBI:57604"/>
        <dbReference type="ChEBI" id="CHEBI:58272"/>
        <dbReference type="ChEBI" id="CHEBI:456216"/>
        <dbReference type="EC" id="2.7.2.3"/>
    </reaction>
</comment>
<comment type="pathway">
    <text evidence="1">Carbohydrate degradation; glycolysis; pyruvate from D-glyceraldehyde 3-phosphate: step 2/5.</text>
</comment>
<comment type="subunit">
    <text evidence="1">Monomer.</text>
</comment>
<comment type="subcellular location">
    <subcellularLocation>
        <location evidence="1">Cytoplasm</location>
    </subcellularLocation>
</comment>
<comment type="similarity">
    <text evidence="1">Belongs to the phosphoglycerate kinase family.</text>
</comment>
<evidence type="ECO:0000255" key="1">
    <source>
        <dbReference type="HAMAP-Rule" id="MF_00145"/>
    </source>
</evidence>
<organism>
    <name type="scientific">Francisella tularensis subsp. holarctica (strain OSU18)</name>
    <dbReference type="NCBI Taxonomy" id="393011"/>
    <lineage>
        <taxon>Bacteria</taxon>
        <taxon>Pseudomonadati</taxon>
        <taxon>Pseudomonadota</taxon>
        <taxon>Gammaproteobacteria</taxon>
        <taxon>Thiotrichales</taxon>
        <taxon>Francisellaceae</taxon>
        <taxon>Francisella</taxon>
    </lineage>
</organism>
<name>PGK_FRATO</name>
<feature type="chain" id="PRO_1000057993" description="Phosphoglycerate kinase">
    <location>
        <begin position="1"/>
        <end position="392"/>
    </location>
</feature>
<feature type="binding site" evidence="1">
    <location>
        <begin position="21"/>
        <end position="23"/>
    </location>
    <ligand>
        <name>substrate</name>
    </ligand>
</feature>
<feature type="binding site" evidence="1">
    <location>
        <position position="36"/>
    </location>
    <ligand>
        <name>substrate</name>
    </ligand>
</feature>
<feature type="binding site" evidence="1">
    <location>
        <begin position="59"/>
        <end position="62"/>
    </location>
    <ligand>
        <name>substrate</name>
    </ligand>
</feature>
<feature type="binding site" evidence="1">
    <location>
        <position position="113"/>
    </location>
    <ligand>
        <name>substrate</name>
    </ligand>
</feature>
<feature type="binding site" evidence="1">
    <location>
        <position position="146"/>
    </location>
    <ligand>
        <name>substrate</name>
    </ligand>
</feature>
<feature type="binding site" evidence="1">
    <location>
        <position position="197"/>
    </location>
    <ligand>
        <name>ATP</name>
        <dbReference type="ChEBI" id="CHEBI:30616"/>
    </ligand>
</feature>
<feature type="binding site" evidence="1">
    <location>
        <position position="319"/>
    </location>
    <ligand>
        <name>ATP</name>
        <dbReference type="ChEBI" id="CHEBI:30616"/>
    </ligand>
</feature>
<feature type="binding site" evidence="1">
    <location>
        <begin position="345"/>
        <end position="348"/>
    </location>
    <ligand>
        <name>ATP</name>
        <dbReference type="ChEBI" id="CHEBI:30616"/>
    </ligand>
</feature>
<accession>Q0BLP2</accession>
<proteinExistence type="inferred from homology"/>